<protein>
    <recommendedName>
        <fullName evidence="1">Peptide deformylase</fullName>
        <shortName evidence="1">PDF</shortName>
        <ecNumber evidence="1">3.5.1.88</ecNumber>
    </recommendedName>
    <alternativeName>
        <fullName evidence="1">Polypeptide deformylase</fullName>
    </alternativeName>
</protein>
<accession>A9KM99</accession>
<keyword id="KW-0378">Hydrolase</keyword>
<keyword id="KW-0408">Iron</keyword>
<keyword id="KW-0479">Metal-binding</keyword>
<keyword id="KW-0648">Protein biosynthesis</keyword>
<keyword id="KW-1185">Reference proteome</keyword>
<evidence type="ECO:0000255" key="1">
    <source>
        <dbReference type="HAMAP-Rule" id="MF_00163"/>
    </source>
</evidence>
<dbReference type="EC" id="3.5.1.88" evidence="1"/>
<dbReference type="EMBL" id="CP000885">
    <property type="protein sequence ID" value="ABX42853.1"/>
    <property type="molecule type" value="Genomic_DNA"/>
</dbReference>
<dbReference type="RefSeq" id="WP_012200506.1">
    <property type="nucleotide sequence ID" value="NC_010001.1"/>
</dbReference>
<dbReference type="SMR" id="A9KM99"/>
<dbReference type="STRING" id="357809.Cphy_2492"/>
<dbReference type="KEGG" id="cpy:Cphy_2492"/>
<dbReference type="eggNOG" id="COG0242">
    <property type="taxonomic scope" value="Bacteria"/>
</dbReference>
<dbReference type="HOGENOM" id="CLU_061901_4_2_9"/>
<dbReference type="OrthoDB" id="9784988at2"/>
<dbReference type="Proteomes" id="UP000000370">
    <property type="component" value="Chromosome"/>
</dbReference>
<dbReference type="GO" id="GO:0046872">
    <property type="term" value="F:metal ion binding"/>
    <property type="evidence" value="ECO:0007669"/>
    <property type="project" value="UniProtKB-KW"/>
</dbReference>
<dbReference type="GO" id="GO:0042586">
    <property type="term" value="F:peptide deformylase activity"/>
    <property type="evidence" value="ECO:0007669"/>
    <property type="project" value="UniProtKB-UniRule"/>
</dbReference>
<dbReference type="GO" id="GO:0043686">
    <property type="term" value="P:co-translational protein modification"/>
    <property type="evidence" value="ECO:0007669"/>
    <property type="project" value="TreeGrafter"/>
</dbReference>
<dbReference type="GO" id="GO:0006412">
    <property type="term" value="P:translation"/>
    <property type="evidence" value="ECO:0007669"/>
    <property type="project" value="UniProtKB-UniRule"/>
</dbReference>
<dbReference type="CDD" id="cd00487">
    <property type="entry name" value="Pep_deformylase"/>
    <property type="match status" value="1"/>
</dbReference>
<dbReference type="Gene3D" id="3.90.45.10">
    <property type="entry name" value="Peptide deformylase"/>
    <property type="match status" value="1"/>
</dbReference>
<dbReference type="HAMAP" id="MF_00163">
    <property type="entry name" value="Pep_deformylase"/>
    <property type="match status" value="1"/>
</dbReference>
<dbReference type="InterPro" id="IPR023635">
    <property type="entry name" value="Peptide_deformylase"/>
</dbReference>
<dbReference type="InterPro" id="IPR036821">
    <property type="entry name" value="Peptide_deformylase_sf"/>
</dbReference>
<dbReference type="NCBIfam" id="TIGR00079">
    <property type="entry name" value="pept_deformyl"/>
    <property type="match status" value="1"/>
</dbReference>
<dbReference type="NCBIfam" id="NF001159">
    <property type="entry name" value="PRK00150.1-3"/>
    <property type="match status" value="1"/>
</dbReference>
<dbReference type="PANTHER" id="PTHR10458">
    <property type="entry name" value="PEPTIDE DEFORMYLASE"/>
    <property type="match status" value="1"/>
</dbReference>
<dbReference type="PANTHER" id="PTHR10458:SF22">
    <property type="entry name" value="PEPTIDE DEFORMYLASE"/>
    <property type="match status" value="1"/>
</dbReference>
<dbReference type="Pfam" id="PF01327">
    <property type="entry name" value="Pep_deformylase"/>
    <property type="match status" value="1"/>
</dbReference>
<dbReference type="PIRSF" id="PIRSF004749">
    <property type="entry name" value="Pep_def"/>
    <property type="match status" value="1"/>
</dbReference>
<dbReference type="PRINTS" id="PR01576">
    <property type="entry name" value="PDEFORMYLASE"/>
</dbReference>
<dbReference type="SUPFAM" id="SSF56420">
    <property type="entry name" value="Peptide deformylase"/>
    <property type="match status" value="1"/>
</dbReference>
<sequence length="163" mass="17951">MAKRNIRIMGDSILNKTSKVIEEVTPKIDTLIDDMLDTMYDAGGVGLAAPQVGVLKRLVVIDVSLEGNEPIILINPEIISTDGEQTGDEGCLSLPGKAGIVTRPNYVKVKAYDRHMKPFEVEGEGLLARAFCHEIDHLDGILYVEKVNGEVHEVTSYDEEEEE</sequence>
<gene>
    <name evidence="1" type="primary">def</name>
    <name type="ordered locus">Cphy_2492</name>
</gene>
<comment type="function">
    <text evidence="1">Removes the formyl group from the N-terminal Met of newly synthesized proteins. Requires at least a dipeptide for an efficient rate of reaction. N-terminal L-methionine is a prerequisite for activity but the enzyme has broad specificity at other positions.</text>
</comment>
<comment type="catalytic activity">
    <reaction evidence="1">
        <text>N-terminal N-formyl-L-methionyl-[peptide] + H2O = N-terminal L-methionyl-[peptide] + formate</text>
        <dbReference type="Rhea" id="RHEA:24420"/>
        <dbReference type="Rhea" id="RHEA-COMP:10639"/>
        <dbReference type="Rhea" id="RHEA-COMP:10640"/>
        <dbReference type="ChEBI" id="CHEBI:15377"/>
        <dbReference type="ChEBI" id="CHEBI:15740"/>
        <dbReference type="ChEBI" id="CHEBI:49298"/>
        <dbReference type="ChEBI" id="CHEBI:64731"/>
        <dbReference type="EC" id="3.5.1.88"/>
    </reaction>
</comment>
<comment type="cofactor">
    <cofactor evidence="1">
        <name>Fe(2+)</name>
        <dbReference type="ChEBI" id="CHEBI:29033"/>
    </cofactor>
    <text evidence="1">Binds 1 Fe(2+) ion.</text>
</comment>
<comment type="similarity">
    <text evidence="1">Belongs to the polypeptide deformylase family.</text>
</comment>
<feature type="chain" id="PRO_1000076941" description="Peptide deformylase">
    <location>
        <begin position="1"/>
        <end position="163"/>
    </location>
</feature>
<feature type="active site" evidence="1">
    <location>
        <position position="134"/>
    </location>
</feature>
<feature type="binding site" evidence="1">
    <location>
        <position position="91"/>
    </location>
    <ligand>
        <name>Fe cation</name>
        <dbReference type="ChEBI" id="CHEBI:24875"/>
    </ligand>
</feature>
<feature type="binding site" evidence="1">
    <location>
        <position position="133"/>
    </location>
    <ligand>
        <name>Fe cation</name>
        <dbReference type="ChEBI" id="CHEBI:24875"/>
    </ligand>
</feature>
<feature type="binding site" evidence="1">
    <location>
        <position position="137"/>
    </location>
    <ligand>
        <name>Fe cation</name>
        <dbReference type="ChEBI" id="CHEBI:24875"/>
    </ligand>
</feature>
<organism>
    <name type="scientific">Lachnoclostridium phytofermentans (strain ATCC 700394 / DSM 18823 / ISDg)</name>
    <name type="common">Clostridium phytofermentans</name>
    <dbReference type="NCBI Taxonomy" id="357809"/>
    <lineage>
        <taxon>Bacteria</taxon>
        <taxon>Bacillati</taxon>
        <taxon>Bacillota</taxon>
        <taxon>Clostridia</taxon>
        <taxon>Lachnospirales</taxon>
        <taxon>Lachnospiraceae</taxon>
    </lineage>
</organism>
<proteinExistence type="inferred from homology"/>
<reference key="1">
    <citation type="submission" date="2007-11" db="EMBL/GenBank/DDBJ databases">
        <title>Complete genome sequence of Clostridium phytofermentans ISDg.</title>
        <authorList>
            <person name="Leschine S.B."/>
            <person name="Warnick T.A."/>
            <person name="Blanchard J.L."/>
            <person name="Schnell D.J."/>
            <person name="Petit E.L."/>
            <person name="LaTouf W.G."/>
            <person name="Copeland A."/>
            <person name="Lucas S."/>
            <person name="Lapidus A."/>
            <person name="Barry K."/>
            <person name="Glavina del Rio T."/>
            <person name="Dalin E."/>
            <person name="Tice H."/>
            <person name="Pitluck S."/>
            <person name="Kiss H."/>
            <person name="Brettin T."/>
            <person name="Bruce D."/>
            <person name="Detter J.C."/>
            <person name="Han C."/>
            <person name="Kuske C."/>
            <person name="Schmutz J."/>
            <person name="Larimer F."/>
            <person name="Land M."/>
            <person name="Hauser L."/>
            <person name="Kyrpides N."/>
            <person name="Kim E.A."/>
            <person name="Richardson P."/>
        </authorList>
    </citation>
    <scope>NUCLEOTIDE SEQUENCE [LARGE SCALE GENOMIC DNA]</scope>
    <source>
        <strain>ATCC 700394 / DSM 18823 / ISDg</strain>
    </source>
</reference>
<name>DEF_LACP7</name>